<evidence type="ECO:0000255" key="1">
    <source>
        <dbReference type="HAMAP-Rule" id="MF_00015"/>
    </source>
</evidence>
<feature type="chain" id="PRO_1000089549" description="LexA repressor">
    <location>
        <begin position="1"/>
        <end position="240"/>
    </location>
</feature>
<feature type="DNA-binding region" description="H-T-H motif" evidence="1">
    <location>
        <begin position="26"/>
        <end position="46"/>
    </location>
</feature>
<feature type="active site" description="For autocatalytic cleavage activity" evidence="1">
    <location>
        <position position="161"/>
    </location>
</feature>
<feature type="active site" description="For autocatalytic cleavage activity" evidence="1">
    <location>
        <position position="199"/>
    </location>
</feature>
<feature type="site" description="Cleavage; by autolysis" evidence="1">
    <location>
        <begin position="126"/>
        <end position="127"/>
    </location>
</feature>
<proteinExistence type="inferred from homology"/>
<name>LEXA_BRUA1</name>
<accession>B2S5Z4</accession>
<keyword id="KW-0068">Autocatalytic cleavage</keyword>
<keyword id="KW-0227">DNA damage</keyword>
<keyword id="KW-0234">DNA repair</keyword>
<keyword id="KW-0235">DNA replication</keyword>
<keyword id="KW-0238">DNA-binding</keyword>
<keyword id="KW-0378">Hydrolase</keyword>
<keyword id="KW-0678">Repressor</keyword>
<keyword id="KW-0742">SOS response</keyword>
<keyword id="KW-0804">Transcription</keyword>
<keyword id="KW-0805">Transcription regulation</keyword>
<organism>
    <name type="scientific">Brucella abortus (strain S19)</name>
    <dbReference type="NCBI Taxonomy" id="430066"/>
    <lineage>
        <taxon>Bacteria</taxon>
        <taxon>Pseudomonadati</taxon>
        <taxon>Pseudomonadota</taxon>
        <taxon>Alphaproteobacteria</taxon>
        <taxon>Hyphomicrobiales</taxon>
        <taxon>Brucellaceae</taxon>
        <taxon>Brucella/Ochrobactrum group</taxon>
        <taxon>Brucella</taxon>
    </lineage>
</organism>
<gene>
    <name evidence="1" type="primary">lexA</name>
    <name type="ordered locus">BAbS19_I10840</name>
</gene>
<dbReference type="EC" id="3.4.21.88" evidence="1"/>
<dbReference type="EMBL" id="CP000887">
    <property type="protein sequence ID" value="ACD72591.1"/>
    <property type="molecule type" value="Genomic_DNA"/>
</dbReference>
<dbReference type="RefSeq" id="WP_002964272.1">
    <property type="nucleotide sequence ID" value="NC_010742.1"/>
</dbReference>
<dbReference type="SMR" id="B2S5Z4"/>
<dbReference type="MEROPS" id="S24.001"/>
<dbReference type="GeneID" id="97533604"/>
<dbReference type="KEGG" id="bmc:BAbS19_I10840"/>
<dbReference type="HOGENOM" id="CLU_066192_45_2_5"/>
<dbReference type="Proteomes" id="UP000002565">
    <property type="component" value="Chromosome 1"/>
</dbReference>
<dbReference type="GO" id="GO:0003677">
    <property type="term" value="F:DNA binding"/>
    <property type="evidence" value="ECO:0007669"/>
    <property type="project" value="UniProtKB-UniRule"/>
</dbReference>
<dbReference type="GO" id="GO:0004252">
    <property type="term" value="F:serine-type endopeptidase activity"/>
    <property type="evidence" value="ECO:0007669"/>
    <property type="project" value="UniProtKB-UniRule"/>
</dbReference>
<dbReference type="GO" id="GO:0006281">
    <property type="term" value="P:DNA repair"/>
    <property type="evidence" value="ECO:0007669"/>
    <property type="project" value="UniProtKB-UniRule"/>
</dbReference>
<dbReference type="GO" id="GO:0006260">
    <property type="term" value="P:DNA replication"/>
    <property type="evidence" value="ECO:0007669"/>
    <property type="project" value="UniProtKB-UniRule"/>
</dbReference>
<dbReference type="GO" id="GO:0045892">
    <property type="term" value="P:negative regulation of DNA-templated transcription"/>
    <property type="evidence" value="ECO:0007669"/>
    <property type="project" value="UniProtKB-UniRule"/>
</dbReference>
<dbReference type="GO" id="GO:0006508">
    <property type="term" value="P:proteolysis"/>
    <property type="evidence" value="ECO:0007669"/>
    <property type="project" value="InterPro"/>
</dbReference>
<dbReference type="GO" id="GO:0009432">
    <property type="term" value="P:SOS response"/>
    <property type="evidence" value="ECO:0007669"/>
    <property type="project" value="UniProtKB-UniRule"/>
</dbReference>
<dbReference type="CDD" id="cd06529">
    <property type="entry name" value="S24_LexA-like"/>
    <property type="match status" value="1"/>
</dbReference>
<dbReference type="FunFam" id="1.10.10.10:FF:000102">
    <property type="entry name" value="LexA repressor"/>
    <property type="match status" value="1"/>
</dbReference>
<dbReference type="FunFam" id="2.10.109.10:FF:000001">
    <property type="entry name" value="LexA repressor"/>
    <property type="match status" value="1"/>
</dbReference>
<dbReference type="Gene3D" id="2.10.109.10">
    <property type="entry name" value="Umud Fragment, subunit A"/>
    <property type="match status" value="1"/>
</dbReference>
<dbReference type="Gene3D" id="1.10.10.10">
    <property type="entry name" value="Winged helix-like DNA-binding domain superfamily/Winged helix DNA-binding domain"/>
    <property type="match status" value="1"/>
</dbReference>
<dbReference type="HAMAP" id="MF_00015">
    <property type="entry name" value="LexA"/>
    <property type="match status" value="1"/>
</dbReference>
<dbReference type="InterPro" id="IPR006200">
    <property type="entry name" value="LexA"/>
</dbReference>
<dbReference type="InterPro" id="IPR039418">
    <property type="entry name" value="LexA-like"/>
</dbReference>
<dbReference type="InterPro" id="IPR036286">
    <property type="entry name" value="LexA/Signal_pep-like_sf"/>
</dbReference>
<dbReference type="InterPro" id="IPR006199">
    <property type="entry name" value="LexA_DNA-bd_dom"/>
</dbReference>
<dbReference type="InterPro" id="IPR050077">
    <property type="entry name" value="LexA_repressor"/>
</dbReference>
<dbReference type="InterPro" id="IPR006197">
    <property type="entry name" value="Peptidase_S24_LexA"/>
</dbReference>
<dbReference type="InterPro" id="IPR015927">
    <property type="entry name" value="Peptidase_S24_S26A/B/C"/>
</dbReference>
<dbReference type="InterPro" id="IPR036388">
    <property type="entry name" value="WH-like_DNA-bd_sf"/>
</dbReference>
<dbReference type="InterPro" id="IPR036390">
    <property type="entry name" value="WH_DNA-bd_sf"/>
</dbReference>
<dbReference type="NCBIfam" id="TIGR00498">
    <property type="entry name" value="lexA"/>
    <property type="match status" value="1"/>
</dbReference>
<dbReference type="PANTHER" id="PTHR33516">
    <property type="entry name" value="LEXA REPRESSOR"/>
    <property type="match status" value="1"/>
</dbReference>
<dbReference type="PANTHER" id="PTHR33516:SF2">
    <property type="entry name" value="LEXA REPRESSOR-RELATED"/>
    <property type="match status" value="1"/>
</dbReference>
<dbReference type="Pfam" id="PF01726">
    <property type="entry name" value="LexA_DNA_bind"/>
    <property type="match status" value="1"/>
</dbReference>
<dbReference type="Pfam" id="PF00717">
    <property type="entry name" value="Peptidase_S24"/>
    <property type="match status" value="1"/>
</dbReference>
<dbReference type="PRINTS" id="PR00726">
    <property type="entry name" value="LEXASERPTASE"/>
</dbReference>
<dbReference type="SUPFAM" id="SSF51306">
    <property type="entry name" value="LexA/Signal peptidase"/>
    <property type="match status" value="1"/>
</dbReference>
<dbReference type="SUPFAM" id="SSF46785">
    <property type="entry name" value="Winged helix' DNA-binding domain"/>
    <property type="match status" value="1"/>
</dbReference>
<reference key="1">
    <citation type="journal article" date="2008" name="PLoS ONE">
        <title>Genome sequence of Brucella abortus vaccine strain S19 compared to virulent strains yields candidate virulence genes.</title>
        <authorList>
            <person name="Crasta O.R."/>
            <person name="Folkerts O."/>
            <person name="Fei Z."/>
            <person name="Mane S.P."/>
            <person name="Evans C."/>
            <person name="Martino-Catt S."/>
            <person name="Bricker B."/>
            <person name="Yu G."/>
            <person name="Du L."/>
            <person name="Sobral B.W."/>
        </authorList>
    </citation>
    <scope>NUCLEOTIDE SEQUENCE [LARGE SCALE GENOMIC DNA]</scope>
    <source>
        <strain>S19</strain>
    </source>
</reference>
<protein>
    <recommendedName>
        <fullName evidence="1">LexA repressor</fullName>
        <ecNumber evidence="1">3.4.21.88</ecNumber>
    </recommendedName>
</protein>
<comment type="function">
    <text evidence="1">Represses a number of genes involved in the response to DNA damage (SOS response), including recA and lexA. In the presence of single-stranded DNA, RecA interacts with LexA causing an autocatalytic cleavage which disrupts the DNA-binding part of LexA, leading to derepression of the SOS regulon and eventually DNA repair.</text>
</comment>
<comment type="catalytic activity">
    <reaction evidence="1">
        <text>Hydrolysis of Ala-|-Gly bond in repressor LexA.</text>
        <dbReference type="EC" id="3.4.21.88"/>
    </reaction>
</comment>
<comment type="subunit">
    <text evidence="1">Homodimer.</text>
</comment>
<comment type="similarity">
    <text evidence="1">Belongs to the peptidase S24 family.</text>
</comment>
<sequence length="240" mass="26070">MLTRKQHELLLFIHERLKETGIPPSFDEMKEALDLASKSGIHRLITALEERGFIRRLPNRARALEVLRLPDSIAPGLSPQKKFAPSVIEGSLGKVASVQPVRPAPAPQNSEAPATVSVPVMGRIAAGVPISAIQNQTHMLSLPPEMIGAGEHYALEVKGDSMIDAGIFDGDTVIIKRGDTANPGEIVVALVDEEEATLKRFRREGASIALEAANPAYETRIFGPDRVHVQGKLVGLIRRY</sequence>